<comment type="function">
    <text evidence="1">Acts as a chaperone.</text>
</comment>
<comment type="induction">
    <text evidence="1">By stress conditions e.g. heat shock.</text>
</comment>
<comment type="similarity">
    <text evidence="1">Belongs to the heat shock protein 70 family.</text>
</comment>
<dbReference type="EMBL" id="CP000440">
    <property type="protein sequence ID" value="ABI86205.1"/>
    <property type="molecule type" value="Genomic_DNA"/>
</dbReference>
<dbReference type="RefSeq" id="WP_011656038.1">
    <property type="nucleotide sequence ID" value="NZ_CP009798.1"/>
</dbReference>
<dbReference type="SMR" id="Q0BI18"/>
<dbReference type="GeneID" id="93083944"/>
<dbReference type="KEGG" id="bam:Bamb_0646"/>
<dbReference type="PATRIC" id="fig|339670.21.peg.950"/>
<dbReference type="eggNOG" id="COG0443">
    <property type="taxonomic scope" value="Bacteria"/>
</dbReference>
<dbReference type="Proteomes" id="UP000000662">
    <property type="component" value="Chromosome 1"/>
</dbReference>
<dbReference type="GO" id="GO:0005524">
    <property type="term" value="F:ATP binding"/>
    <property type="evidence" value="ECO:0007669"/>
    <property type="project" value="UniProtKB-UniRule"/>
</dbReference>
<dbReference type="GO" id="GO:0140662">
    <property type="term" value="F:ATP-dependent protein folding chaperone"/>
    <property type="evidence" value="ECO:0007669"/>
    <property type="project" value="InterPro"/>
</dbReference>
<dbReference type="GO" id="GO:0051082">
    <property type="term" value="F:unfolded protein binding"/>
    <property type="evidence" value="ECO:0007669"/>
    <property type="project" value="InterPro"/>
</dbReference>
<dbReference type="CDD" id="cd10234">
    <property type="entry name" value="ASKHA_NBD_HSP70_DnaK-like"/>
    <property type="match status" value="1"/>
</dbReference>
<dbReference type="FunFam" id="2.60.34.10:FF:000014">
    <property type="entry name" value="Chaperone protein DnaK HSP70"/>
    <property type="match status" value="1"/>
</dbReference>
<dbReference type="FunFam" id="3.30.30.30:FF:000003">
    <property type="entry name" value="Heat shock protein 9"/>
    <property type="match status" value="1"/>
</dbReference>
<dbReference type="FunFam" id="1.20.1270.10:FF:000001">
    <property type="entry name" value="Molecular chaperone DnaK"/>
    <property type="match status" value="1"/>
</dbReference>
<dbReference type="FunFam" id="3.30.420.40:FF:000004">
    <property type="entry name" value="Molecular chaperone DnaK"/>
    <property type="match status" value="1"/>
</dbReference>
<dbReference type="FunFam" id="3.90.640.10:FF:000003">
    <property type="entry name" value="Molecular chaperone DnaK"/>
    <property type="match status" value="1"/>
</dbReference>
<dbReference type="Gene3D" id="1.20.1270.10">
    <property type="match status" value="1"/>
</dbReference>
<dbReference type="Gene3D" id="3.30.420.40">
    <property type="match status" value="2"/>
</dbReference>
<dbReference type="Gene3D" id="3.90.640.10">
    <property type="entry name" value="Actin, Chain A, domain 4"/>
    <property type="match status" value="1"/>
</dbReference>
<dbReference type="Gene3D" id="2.60.34.10">
    <property type="entry name" value="Substrate Binding Domain Of DNAk, Chain A, domain 1"/>
    <property type="match status" value="1"/>
</dbReference>
<dbReference type="HAMAP" id="MF_00332">
    <property type="entry name" value="DnaK"/>
    <property type="match status" value="1"/>
</dbReference>
<dbReference type="InterPro" id="IPR043129">
    <property type="entry name" value="ATPase_NBD"/>
</dbReference>
<dbReference type="InterPro" id="IPR012725">
    <property type="entry name" value="Chaperone_DnaK"/>
</dbReference>
<dbReference type="InterPro" id="IPR018181">
    <property type="entry name" value="Heat_shock_70_CS"/>
</dbReference>
<dbReference type="InterPro" id="IPR029048">
    <property type="entry name" value="HSP70_C_sf"/>
</dbReference>
<dbReference type="InterPro" id="IPR029047">
    <property type="entry name" value="HSP70_peptide-bd_sf"/>
</dbReference>
<dbReference type="InterPro" id="IPR013126">
    <property type="entry name" value="Hsp_70_fam"/>
</dbReference>
<dbReference type="NCBIfam" id="NF001413">
    <property type="entry name" value="PRK00290.1"/>
    <property type="match status" value="1"/>
</dbReference>
<dbReference type="NCBIfam" id="NF003520">
    <property type="entry name" value="PRK05183.1"/>
    <property type="match status" value="1"/>
</dbReference>
<dbReference type="NCBIfam" id="TIGR02350">
    <property type="entry name" value="prok_dnaK"/>
    <property type="match status" value="1"/>
</dbReference>
<dbReference type="PANTHER" id="PTHR19375">
    <property type="entry name" value="HEAT SHOCK PROTEIN 70KDA"/>
    <property type="match status" value="1"/>
</dbReference>
<dbReference type="Pfam" id="PF00012">
    <property type="entry name" value="HSP70"/>
    <property type="match status" value="1"/>
</dbReference>
<dbReference type="PRINTS" id="PR00301">
    <property type="entry name" value="HEATSHOCK70"/>
</dbReference>
<dbReference type="SUPFAM" id="SSF53067">
    <property type="entry name" value="Actin-like ATPase domain"/>
    <property type="match status" value="2"/>
</dbReference>
<dbReference type="SUPFAM" id="SSF100934">
    <property type="entry name" value="Heat shock protein 70kD (HSP70), C-terminal subdomain"/>
    <property type="match status" value="1"/>
</dbReference>
<dbReference type="SUPFAM" id="SSF100920">
    <property type="entry name" value="Heat shock protein 70kD (HSP70), peptide-binding domain"/>
    <property type="match status" value="1"/>
</dbReference>
<dbReference type="PROSITE" id="PS00297">
    <property type="entry name" value="HSP70_1"/>
    <property type="match status" value="1"/>
</dbReference>
<dbReference type="PROSITE" id="PS00329">
    <property type="entry name" value="HSP70_2"/>
    <property type="match status" value="1"/>
</dbReference>
<dbReference type="PROSITE" id="PS01036">
    <property type="entry name" value="HSP70_3"/>
    <property type="match status" value="1"/>
</dbReference>
<proteinExistence type="inferred from homology"/>
<organism>
    <name type="scientific">Burkholderia ambifaria (strain ATCC BAA-244 / DSM 16087 / CCUG 44356 / LMG 19182 / AMMD)</name>
    <name type="common">Burkholderia cepacia (strain AMMD)</name>
    <dbReference type="NCBI Taxonomy" id="339670"/>
    <lineage>
        <taxon>Bacteria</taxon>
        <taxon>Pseudomonadati</taxon>
        <taxon>Pseudomonadota</taxon>
        <taxon>Betaproteobacteria</taxon>
        <taxon>Burkholderiales</taxon>
        <taxon>Burkholderiaceae</taxon>
        <taxon>Burkholderia</taxon>
        <taxon>Burkholderia cepacia complex</taxon>
    </lineage>
</organism>
<keyword id="KW-0067">ATP-binding</keyword>
<keyword id="KW-0143">Chaperone</keyword>
<keyword id="KW-0547">Nucleotide-binding</keyword>
<keyword id="KW-0597">Phosphoprotein</keyword>
<keyword id="KW-0346">Stress response</keyword>
<reference key="1">
    <citation type="submission" date="2006-08" db="EMBL/GenBank/DDBJ databases">
        <title>Complete sequence of chromosome 1 of Burkholderia cepacia AMMD.</title>
        <authorList>
            <person name="Copeland A."/>
            <person name="Lucas S."/>
            <person name="Lapidus A."/>
            <person name="Barry K."/>
            <person name="Detter J.C."/>
            <person name="Glavina del Rio T."/>
            <person name="Hammon N."/>
            <person name="Israni S."/>
            <person name="Pitluck S."/>
            <person name="Bruce D."/>
            <person name="Chain P."/>
            <person name="Malfatti S."/>
            <person name="Shin M."/>
            <person name="Vergez L."/>
            <person name="Schmutz J."/>
            <person name="Larimer F."/>
            <person name="Land M."/>
            <person name="Hauser L."/>
            <person name="Kyrpides N."/>
            <person name="Kim E."/>
            <person name="Parke J."/>
            <person name="Coenye T."/>
            <person name="Konstantinidis K."/>
            <person name="Ramette A."/>
            <person name="Tiedje J."/>
            <person name="Richardson P."/>
        </authorList>
    </citation>
    <scope>NUCLEOTIDE SEQUENCE [LARGE SCALE GENOMIC DNA]</scope>
    <source>
        <strain>ATCC BAA-244 / DSM 16087 / CCUG 44356 / LMG 19182 / AMMD</strain>
    </source>
</reference>
<accession>Q0BI18</accession>
<protein>
    <recommendedName>
        <fullName evidence="1">Chaperone protein DnaK</fullName>
    </recommendedName>
    <alternativeName>
        <fullName evidence="1">HSP70</fullName>
    </alternativeName>
    <alternativeName>
        <fullName evidence="1">Heat shock 70 kDa protein</fullName>
    </alternativeName>
    <alternativeName>
        <fullName evidence="1">Heat shock protein 70</fullName>
    </alternativeName>
</protein>
<name>DNAK_BURCM</name>
<evidence type="ECO:0000255" key="1">
    <source>
        <dbReference type="HAMAP-Rule" id="MF_00332"/>
    </source>
</evidence>
<evidence type="ECO:0000256" key="2">
    <source>
        <dbReference type="SAM" id="MobiDB-lite"/>
    </source>
</evidence>
<feature type="chain" id="PRO_1000059519" description="Chaperone protein DnaK">
    <location>
        <begin position="1"/>
        <end position="650"/>
    </location>
</feature>
<feature type="region of interest" description="Disordered" evidence="2">
    <location>
        <begin position="612"/>
        <end position="650"/>
    </location>
</feature>
<feature type="compositionally biased region" description="Low complexity" evidence="2">
    <location>
        <begin position="612"/>
        <end position="636"/>
    </location>
</feature>
<feature type="modified residue" description="Phosphothreonine; by autocatalysis" evidence="1">
    <location>
        <position position="200"/>
    </location>
</feature>
<gene>
    <name evidence="1" type="primary">dnaK</name>
    <name type="ordered locus">Bamb_0646</name>
</gene>
<sequence length="650" mass="69859">MGKIIGIDLGTTNSCVAIMEGNQVKVIENSEGTRTTPSIIAYMDDNEVLVGAPAKRQSVTNPRNTLFAVKRLIGRRFEEKEVQKDIGLMPYAIIKADNGDAWVEAHGEKLAPPQVSAEVLRKMKKTAEDYLGEPVTEAVITVPAYFNDSQRQATKDAGRIAGLEVKRIINEPTAAALAFGLDKAEKGDRKIAVYDLGGGTFDVSIIEIADVDGEMQFEVLSTNGDTFLGGEDFDQRIIDYIIGEFKKEQGVDLSKDVLALQRLKEAAEKAKIELSSSQQTEINLPYITADASGPKHLNLKITRAKLEALVEDLVERTIEPCRIAIKDAGVKVSDIDDVILVGGQTRMPKVQEKVKEFFGKDPRRDVNPDEAVAVGAAIQGQVLSGDRKDVLLLDVTPLSLGIETLGGVMTKMISKNTTIPTKHAQVYSTADDNQSAVTIKVFQGEREMAAGNKLLGEFNLEGIPPSPRGVPQIEVTFDIDANGILHVGAKDKATGKENKITIKANSGLTDAEIDQMIKDAEANAAEDHKLRELADSRNQGDALVHSTKKALTEYGDKLDAGEKEKIEAALKSLEDALKDTSADKAAIDAKVEELGQVSQKLGEKMYADMQAQQAGAAGAAGAAEGAAHAGGAQQAADDVVDAEFKEVKKD</sequence>